<keyword id="KW-0030">Aminoacyl-tRNA synthetase</keyword>
<keyword id="KW-0067">ATP-binding</keyword>
<keyword id="KW-0963">Cytoplasm</keyword>
<keyword id="KW-0436">Ligase</keyword>
<keyword id="KW-0479">Metal-binding</keyword>
<keyword id="KW-0547">Nucleotide-binding</keyword>
<keyword id="KW-0648">Protein biosynthesis</keyword>
<keyword id="KW-0694">RNA-binding</keyword>
<keyword id="KW-0820">tRNA-binding</keyword>
<keyword id="KW-0862">Zinc</keyword>
<comment type="function">
    <text evidence="1">Catalyzes the attachment of threonine to tRNA(Thr) in a two-step reaction: L-threonine is first activated by ATP to form Thr-AMP and then transferred to the acceptor end of tRNA(Thr). Also edits incorrectly charged L-seryl-tRNA(Thr).</text>
</comment>
<comment type="catalytic activity">
    <reaction evidence="1">
        <text>tRNA(Thr) + L-threonine + ATP = L-threonyl-tRNA(Thr) + AMP + diphosphate + H(+)</text>
        <dbReference type="Rhea" id="RHEA:24624"/>
        <dbReference type="Rhea" id="RHEA-COMP:9670"/>
        <dbReference type="Rhea" id="RHEA-COMP:9704"/>
        <dbReference type="ChEBI" id="CHEBI:15378"/>
        <dbReference type="ChEBI" id="CHEBI:30616"/>
        <dbReference type="ChEBI" id="CHEBI:33019"/>
        <dbReference type="ChEBI" id="CHEBI:57926"/>
        <dbReference type="ChEBI" id="CHEBI:78442"/>
        <dbReference type="ChEBI" id="CHEBI:78534"/>
        <dbReference type="ChEBI" id="CHEBI:456215"/>
        <dbReference type="EC" id="6.1.1.3"/>
    </reaction>
</comment>
<comment type="cofactor">
    <cofactor evidence="1">
        <name>Zn(2+)</name>
        <dbReference type="ChEBI" id="CHEBI:29105"/>
    </cofactor>
    <text evidence="1">Binds 1 zinc ion per subunit.</text>
</comment>
<comment type="subunit">
    <text evidence="1">Homodimer.</text>
</comment>
<comment type="subcellular location">
    <subcellularLocation>
        <location evidence="1">Cytoplasm</location>
    </subcellularLocation>
</comment>
<comment type="similarity">
    <text evidence="1">Belongs to the class-II aminoacyl-tRNA synthetase family.</text>
</comment>
<accession>B8J823</accession>
<feature type="chain" id="PRO_1000199524" description="Threonine--tRNA ligase">
    <location>
        <begin position="1"/>
        <end position="650"/>
    </location>
</feature>
<feature type="domain" description="TGS" evidence="2">
    <location>
        <begin position="3"/>
        <end position="65"/>
    </location>
</feature>
<feature type="region of interest" description="Catalytic" evidence="1">
    <location>
        <begin position="248"/>
        <end position="548"/>
    </location>
</feature>
<feature type="binding site" evidence="1">
    <location>
        <position position="349"/>
    </location>
    <ligand>
        <name>Zn(2+)</name>
        <dbReference type="ChEBI" id="CHEBI:29105"/>
    </ligand>
</feature>
<feature type="binding site" evidence="1">
    <location>
        <position position="400"/>
    </location>
    <ligand>
        <name>Zn(2+)</name>
        <dbReference type="ChEBI" id="CHEBI:29105"/>
    </ligand>
</feature>
<feature type="binding site" evidence="1">
    <location>
        <position position="525"/>
    </location>
    <ligand>
        <name>Zn(2+)</name>
        <dbReference type="ChEBI" id="CHEBI:29105"/>
    </ligand>
</feature>
<gene>
    <name evidence="1" type="primary">thrS</name>
    <name type="ordered locus">A2cp1_1981</name>
</gene>
<sequence>MSDLVKVTLPDGSQKEAPRGTPVIDFVKGQIGPGLAKAAYFARLDGEPVDLSRAIERDARLEIVTTRNPEALEVARHDAAHVMASVVQKLYPGTQVTIGPAIEDGFYYDFARETPFTPEDLERIEKATNEAIKADLPFVRSEISMEAALALFEGMGERYKVEIVKDIAAKGAKTLTLYKHGDWVDFCLGPHGPSTGRIGVVKLLNVAGAYWRGDAKNAMLQRIYGTAFFDKKELDAHLAKLEEVKKRDHRRLGPQLGLFTFHEFAPGAPFWLPAGTVLYNVLEDAMRRLVLKNGYQEVKTPLLFNKRLWETSGHWGKYRENMFLVVDSESDPALPLEDRCSFSLKPMNCPSHHLIYRMDKRSYRELPVRYFTTDALHRNEASGSLGGLTRVRQFEQDDAHIYLREEQVTDEVLRIFELMKVVYGAFGLGFEATFSTRPEQRIGDDALWDRAEALLRKSLDATGLKWTLNAGDGAFYGPKIDMLVTDSLGRKWQTCTIQLDYAAPERFDLTFVGEDNKEHRPVVIHRAIYGSFERFVAILVEHYAGAFPAWLAPVQARVVTVSDRFEAWAREAGEALQARGWRVEVDASSDKLGAKIRNAQLAKIPFTLVVGEKEVEAKGVSPRRHGGEDLKTMPLETFAELMAREATAPF</sequence>
<protein>
    <recommendedName>
        <fullName evidence="1">Threonine--tRNA ligase</fullName>
        <ecNumber evidence="1">6.1.1.3</ecNumber>
    </recommendedName>
    <alternativeName>
        <fullName evidence="1">Threonyl-tRNA synthetase</fullName>
        <shortName evidence="1">ThrRS</shortName>
    </alternativeName>
</protein>
<proteinExistence type="inferred from homology"/>
<reference key="1">
    <citation type="submission" date="2009-01" db="EMBL/GenBank/DDBJ databases">
        <title>Complete sequence of Anaeromyxobacter dehalogenans 2CP-1.</title>
        <authorList>
            <person name="Lucas S."/>
            <person name="Copeland A."/>
            <person name="Lapidus A."/>
            <person name="Glavina del Rio T."/>
            <person name="Dalin E."/>
            <person name="Tice H."/>
            <person name="Bruce D."/>
            <person name="Goodwin L."/>
            <person name="Pitluck S."/>
            <person name="Saunders E."/>
            <person name="Brettin T."/>
            <person name="Detter J.C."/>
            <person name="Han C."/>
            <person name="Larimer F."/>
            <person name="Land M."/>
            <person name="Hauser L."/>
            <person name="Kyrpides N."/>
            <person name="Ovchinnikova G."/>
            <person name="Beliaev A.S."/>
            <person name="Richardson P."/>
        </authorList>
    </citation>
    <scope>NUCLEOTIDE SEQUENCE [LARGE SCALE GENOMIC DNA]</scope>
    <source>
        <strain>2CP-1 / ATCC BAA-258</strain>
    </source>
</reference>
<dbReference type="EC" id="6.1.1.3" evidence="1"/>
<dbReference type="EMBL" id="CP001359">
    <property type="protein sequence ID" value="ACL65322.1"/>
    <property type="molecule type" value="Genomic_DNA"/>
</dbReference>
<dbReference type="RefSeq" id="WP_012633222.1">
    <property type="nucleotide sequence ID" value="NC_011891.1"/>
</dbReference>
<dbReference type="SMR" id="B8J823"/>
<dbReference type="KEGG" id="acp:A2cp1_1981"/>
<dbReference type="HOGENOM" id="CLU_008554_0_1_7"/>
<dbReference type="Proteomes" id="UP000007089">
    <property type="component" value="Chromosome"/>
</dbReference>
<dbReference type="GO" id="GO:0005737">
    <property type="term" value="C:cytoplasm"/>
    <property type="evidence" value="ECO:0007669"/>
    <property type="project" value="UniProtKB-SubCell"/>
</dbReference>
<dbReference type="GO" id="GO:0005524">
    <property type="term" value="F:ATP binding"/>
    <property type="evidence" value="ECO:0007669"/>
    <property type="project" value="UniProtKB-UniRule"/>
</dbReference>
<dbReference type="GO" id="GO:0046872">
    <property type="term" value="F:metal ion binding"/>
    <property type="evidence" value="ECO:0007669"/>
    <property type="project" value="UniProtKB-KW"/>
</dbReference>
<dbReference type="GO" id="GO:0004829">
    <property type="term" value="F:threonine-tRNA ligase activity"/>
    <property type="evidence" value="ECO:0007669"/>
    <property type="project" value="UniProtKB-UniRule"/>
</dbReference>
<dbReference type="GO" id="GO:0000049">
    <property type="term" value="F:tRNA binding"/>
    <property type="evidence" value="ECO:0007669"/>
    <property type="project" value="UniProtKB-KW"/>
</dbReference>
<dbReference type="GO" id="GO:0006435">
    <property type="term" value="P:threonyl-tRNA aminoacylation"/>
    <property type="evidence" value="ECO:0007669"/>
    <property type="project" value="UniProtKB-UniRule"/>
</dbReference>
<dbReference type="CDD" id="cd01667">
    <property type="entry name" value="TGS_ThrRS"/>
    <property type="match status" value="1"/>
</dbReference>
<dbReference type="CDD" id="cd00860">
    <property type="entry name" value="ThrRS_anticodon"/>
    <property type="match status" value="1"/>
</dbReference>
<dbReference type="CDD" id="cd00771">
    <property type="entry name" value="ThrRS_core"/>
    <property type="match status" value="1"/>
</dbReference>
<dbReference type="FunFam" id="3.30.930.10:FF:000019">
    <property type="entry name" value="Threonine--tRNA ligase"/>
    <property type="match status" value="1"/>
</dbReference>
<dbReference type="FunFam" id="3.40.50.800:FF:000001">
    <property type="entry name" value="Threonine--tRNA ligase"/>
    <property type="match status" value="1"/>
</dbReference>
<dbReference type="FunFam" id="3.30.980.10:FF:000005">
    <property type="entry name" value="Threonyl-tRNA synthetase, mitochondrial"/>
    <property type="match status" value="1"/>
</dbReference>
<dbReference type="Gene3D" id="3.10.20.30">
    <property type="match status" value="1"/>
</dbReference>
<dbReference type="Gene3D" id="3.30.54.20">
    <property type="match status" value="1"/>
</dbReference>
<dbReference type="Gene3D" id="3.40.50.800">
    <property type="entry name" value="Anticodon-binding domain"/>
    <property type="match status" value="1"/>
</dbReference>
<dbReference type="Gene3D" id="3.30.930.10">
    <property type="entry name" value="Bira Bifunctional Protein, Domain 2"/>
    <property type="match status" value="1"/>
</dbReference>
<dbReference type="Gene3D" id="3.30.980.10">
    <property type="entry name" value="Threonyl-trna Synthetase, Chain A, domain 2"/>
    <property type="match status" value="1"/>
</dbReference>
<dbReference type="HAMAP" id="MF_00184">
    <property type="entry name" value="Thr_tRNA_synth"/>
    <property type="match status" value="1"/>
</dbReference>
<dbReference type="InterPro" id="IPR002314">
    <property type="entry name" value="aa-tRNA-synt_IIb"/>
</dbReference>
<dbReference type="InterPro" id="IPR006195">
    <property type="entry name" value="aa-tRNA-synth_II"/>
</dbReference>
<dbReference type="InterPro" id="IPR045864">
    <property type="entry name" value="aa-tRNA-synth_II/BPL/LPL"/>
</dbReference>
<dbReference type="InterPro" id="IPR004154">
    <property type="entry name" value="Anticodon-bd"/>
</dbReference>
<dbReference type="InterPro" id="IPR036621">
    <property type="entry name" value="Anticodon-bd_dom_sf"/>
</dbReference>
<dbReference type="InterPro" id="IPR012675">
    <property type="entry name" value="Beta-grasp_dom_sf"/>
</dbReference>
<dbReference type="InterPro" id="IPR004095">
    <property type="entry name" value="TGS"/>
</dbReference>
<dbReference type="InterPro" id="IPR012676">
    <property type="entry name" value="TGS-like"/>
</dbReference>
<dbReference type="InterPro" id="IPR002320">
    <property type="entry name" value="Thr-tRNA-ligase_IIa"/>
</dbReference>
<dbReference type="InterPro" id="IPR018163">
    <property type="entry name" value="Thr/Ala-tRNA-synth_IIc_edit"/>
</dbReference>
<dbReference type="InterPro" id="IPR047246">
    <property type="entry name" value="ThrRS_anticodon"/>
</dbReference>
<dbReference type="InterPro" id="IPR033728">
    <property type="entry name" value="ThrRS_core"/>
</dbReference>
<dbReference type="InterPro" id="IPR012947">
    <property type="entry name" value="tRNA_SAD"/>
</dbReference>
<dbReference type="NCBIfam" id="TIGR00418">
    <property type="entry name" value="thrS"/>
    <property type="match status" value="1"/>
</dbReference>
<dbReference type="PANTHER" id="PTHR11451:SF44">
    <property type="entry name" value="THREONINE--TRNA LIGASE, CHLOROPLASTIC_MITOCHONDRIAL 2"/>
    <property type="match status" value="1"/>
</dbReference>
<dbReference type="PANTHER" id="PTHR11451">
    <property type="entry name" value="THREONINE-TRNA LIGASE"/>
    <property type="match status" value="1"/>
</dbReference>
<dbReference type="Pfam" id="PF03129">
    <property type="entry name" value="HGTP_anticodon"/>
    <property type="match status" value="1"/>
</dbReference>
<dbReference type="Pfam" id="PF02824">
    <property type="entry name" value="TGS"/>
    <property type="match status" value="1"/>
</dbReference>
<dbReference type="Pfam" id="PF00587">
    <property type="entry name" value="tRNA-synt_2b"/>
    <property type="match status" value="1"/>
</dbReference>
<dbReference type="Pfam" id="PF07973">
    <property type="entry name" value="tRNA_SAD"/>
    <property type="match status" value="1"/>
</dbReference>
<dbReference type="PRINTS" id="PR01047">
    <property type="entry name" value="TRNASYNTHTHR"/>
</dbReference>
<dbReference type="SMART" id="SM00863">
    <property type="entry name" value="tRNA_SAD"/>
    <property type="match status" value="1"/>
</dbReference>
<dbReference type="SUPFAM" id="SSF52954">
    <property type="entry name" value="Class II aaRS ABD-related"/>
    <property type="match status" value="1"/>
</dbReference>
<dbReference type="SUPFAM" id="SSF55681">
    <property type="entry name" value="Class II aaRS and biotin synthetases"/>
    <property type="match status" value="1"/>
</dbReference>
<dbReference type="SUPFAM" id="SSF81271">
    <property type="entry name" value="TGS-like"/>
    <property type="match status" value="1"/>
</dbReference>
<dbReference type="SUPFAM" id="SSF55186">
    <property type="entry name" value="ThrRS/AlaRS common domain"/>
    <property type="match status" value="1"/>
</dbReference>
<dbReference type="PROSITE" id="PS50862">
    <property type="entry name" value="AA_TRNA_LIGASE_II"/>
    <property type="match status" value="1"/>
</dbReference>
<dbReference type="PROSITE" id="PS51880">
    <property type="entry name" value="TGS"/>
    <property type="match status" value="1"/>
</dbReference>
<name>SYT_ANAD2</name>
<evidence type="ECO:0000255" key="1">
    <source>
        <dbReference type="HAMAP-Rule" id="MF_00184"/>
    </source>
</evidence>
<evidence type="ECO:0000255" key="2">
    <source>
        <dbReference type="PROSITE-ProRule" id="PRU01228"/>
    </source>
</evidence>
<organism>
    <name type="scientific">Anaeromyxobacter dehalogenans (strain 2CP-1 / ATCC BAA-258)</name>
    <dbReference type="NCBI Taxonomy" id="455488"/>
    <lineage>
        <taxon>Bacteria</taxon>
        <taxon>Pseudomonadati</taxon>
        <taxon>Myxococcota</taxon>
        <taxon>Myxococcia</taxon>
        <taxon>Myxococcales</taxon>
        <taxon>Cystobacterineae</taxon>
        <taxon>Anaeromyxobacteraceae</taxon>
        <taxon>Anaeromyxobacter</taxon>
    </lineage>
</organism>